<reference key="1">
    <citation type="journal article" date="1994" name="Proc. Natl. Acad. Sci. U.S.A.">
        <title>BST-1, a surface molecule of bone marrow stromal cell lines that facilitates pre-B-cell growth.</title>
        <authorList>
            <person name="Kaisho T."/>
            <person name="Ishikawa J."/>
            <person name="Oritani K."/>
            <person name="Inazawa J."/>
            <person name="Tomizawa H."/>
            <person name="Muraoka O."/>
            <person name="Ochi T."/>
            <person name="Hirano T."/>
        </authorList>
    </citation>
    <scope>NUCLEOTIDE SEQUENCE [MRNA] (ISOFORM 1)</scope>
    <scope>FUNCTION</scope>
    <scope>SUBCELLULAR LOCATION</scope>
    <scope>TISSUE SPECIFICITY</scope>
</reference>
<reference key="2">
    <citation type="submission" date="2004-03" db="EMBL/GenBank/DDBJ databases">
        <title>BST1 mRNA, nirs splice variant 1.</title>
        <authorList>
            <person name="Tabata Y."/>
            <person name="Hayashi A."/>
            <person name="Mitsuyama M."/>
            <person name="Kanai S."/>
            <person name="Furuya T."/>
            <person name="Saito T."/>
        </authorList>
    </citation>
    <scope>NUCLEOTIDE SEQUENCE [MRNA] (ISOFORM 2)</scope>
    <scope>ALTERNATIVE SPLICING</scope>
</reference>
<reference key="3">
    <citation type="submission" date="2004-10" db="EMBL/GenBank/DDBJ databases">
        <title>Cloning of human full-length CDSs in BD Creator(TM) system donor vector.</title>
        <authorList>
            <person name="Kalnine N."/>
            <person name="Chen X."/>
            <person name="Rolfs A."/>
            <person name="Halleck A."/>
            <person name="Hines L."/>
            <person name="Eisenstein S."/>
            <person name="Koundinya M."/>
            <person name="Raphael J."/>
            <person name="Moreira D."/>
            <person name="Kelley T."/>
            <person name="LaBaer J."/>
            <person name="Lin Y."/>
            <person name="Phelan M."/>
            <person name="Farmer A."/>
        </authorList>
    </citation>
    <scope>NUCLEOTIDE SEQUENCE [LARGE SCALE MRNA] (ISOFORM 1)</scope>
</reference>
<reference key="4">
    <citation type="journal article" date="2004" name="Nat. Genet.">
        <title>Complete sequencing and characterization of 21,243 full-length human cDNAs.</title>
        <authorList>
            <person name="Ota T."/>
            <person name="Suzuki Y."/>
            <person name="Nishikawa T."/>
            <person name="Otsuki T."/>
            <person name="Sugiyama T."/>
            <person name="Irie R."/>
            <person name="Wakamatsu A."/>
            <person name="Hayashi K."/>
            <person name="Sato H."/>
            <person name="Nagai K."/>
            <person name="Kimura K."/>
            <person name="Makita H."/>
            <person name="Sekine M."/>
            <person name="Obayashi M."/>
            <person name="Nishi T."/>
            <person name="Shibahara T."/>
            <person name="Tanaka T."/>
            <person name="Ishii S."/>
            <person name="Yamamoto J."/>
            <person name="Saito K."/>
            <person name="Kawai Y."/>
            <person name="Isono Y."/>
            <person name="Nakamura Y."/>
            <person name="Nagahari K."/>
            <person name="Murakami K."/>
            <person name="Yasuda T."/>
            <person name="Iwayanagi T."/>
            <person name="Wagatsuma M."/>
            <person name="Shiratori A."/>
            <person name="Sudo H."/>
            <person name="Hosoiri T."/>
            <person name="Kaku Y."/>
            <person name="Kodaira H."/>
            <person name="Kondo H."/>
            <person name="Sugawara M."/>
            <person name="Takahashi M."/>
            <person name="Kanda K."/>
            <person name="Yokoi T."/>
            <person name="Furuya T."/>
            <person name="Kikkawa E."/>
            <person name="Omura Y."/>
            <person name="Abe K."/>
            <person name="Kamihara K."/>
            <person name="Katsuta N."/>
            <person name="Sato K."/>
            <person name="Tanikawa M."/>
            <person name="Yamazaki M."/>
            <person name="Ninomiya K."/>
            <person name="Ishibashi T."/>
            <person name="Yamashita H."/>
            <person name="Murakawa K."/>
            <person name="Fujimori K."/>
            <person name="Tanai H."/>
            <person name="Kimata M."/>
            <person name="Watanabe M."/>
            <person name="Hiraoka S."/>
            <person name="Chiba Y."/>
            <person name="Ishida S."/>
            <person name="Ono Y."/>
            <person name="Takiguchi S."/>
            <person name="Watanabe S."/>
            <person name="Yosida M."/>
            <person name="Hotuta T."/>
            <person name="Kusano J."/>
            <person name="Kanehori K."/>
            <person name="Takahashi-Fujii A."/>
            <person name="Hara H."/>
            <person name="Tanase T.-O."/>
            <person name="Nomura Y."/>
            <person name="Togiya S."/>
            <person name="Komai F."/>
            <person name="Hara R."/>
            <person name="Takeuchi K."/>
            <person name="Arita M."/>
            <person name="Imose N."/>
            <person name="Musashino K."/>
            <person name="Yuuki H."/>
            <person name="Oshima A."/>
            <person name="Sasaki N."/>
            <person name="Aotsuka S."/>
            <person name="Yoshikawa Y."/>
            <person name="Matsunawa H."/>
            <person name="Ichihara T."/>
            <person name="Shiohata N."/>
            <person name="Sano S."/>
            <person name="Moriya S."/>
            <person name="Momiyama H."/>
            <person name="Satoh N."/>
            <person name="Takami S."/>
            <person name="Terashima Y."/>
            <person name="Suzuki O."/>
            <person name="Nakagawa S."/>
            <person name="Senoh A."/>
            <person name="Mizoguchi H."/>
            <person name="Goto Y."/>
            <person name="Shimizu F."/>
            <person name="Wakebe H."/>
            <person name="Hishigaki H."/>
            <person name="Watanabe T."/>
            <person name="Sugiyama A."/>
            <person name="Takemoto M."/>
            <person name="Kawakami B."/>
            <person name="Yamazaki M."/>
            <person name="Watanabe K."/>
            <person name="Kumagai A."/>
            <person name="Itakura S."/>
            <person name="Fukuzumi Y."/>
            <person name="Fujimori Y."/>
            <person name="Komiyama M."/>
            <person name="Tashiro H."/>
            <person name="Tanigami A."/>
            <person name="Fujiwara T."/>
            <person name="Ono T."/>
            <person name="Yamada K."/>
            <person name="Fujii Y."/>
            <person name="Ozaki K."/>
            <person name="Hirao M."/>
            <person name="Ohmori Y."/>
            <person name="Kawabata A."/>
            <person name="Hikiji T."/>
            <person name="Kobatake N."/>
            <person name="Inagaki H."/>
            <person name="Ikema Y."/>
            <person name="Okamoto S."/>
            <person name="Okitani R."/>
            <person name="Kawakami T."/>
            <person name="Noguchi S."/>
            <person name="Itoh T."/>
            <person name="Shigeta K."/>
            <person name="Senba T."/>
            <person name="Matsumura K."/>
            <person name="Nakajima Y."/>
            <person name="Mizuno T."/>
            <person name="Morinaga M."/>
            <person name="Sasaki M."/>
            <person name="Togashi T."/>
            <person name="Oyama M."/>
            <person name="Hata H."/>
            <person name="Watanabe M."/>
            <person name="Komatsu T."/>
            <person name="Mizushima-Sugano J."/>
            <person name="Satoh T."/>
            <person name="Shirai Y."/>
            <person name="Takahashi Y."/>
            <person name="Nakagawa K."/>
            <person name="Okumura K."/>
            <person name="Nagase T."/>
            <person name="Nomura N."/>
            <person name="Kikuchi H."/>
            <person name="Masuho Y."/>
            <person name="Yamashita R."/>
            <person name="Nakai K."/>
            <person name="Yada T."/>
            <person name="Nakamura Y."/>
            <person name="Ohara O."/>
            <person name="Isogai T."/>
            <person name="Sugano S."/>
        </authorList>
    </citation>
    <scope>NUCLEOTIDE SEQUENCE [LARGE SCALE MRNA] (ISOFORM 1)</scope>
    <source>
        <tissue>Thalamus</tissue>
    </source>
</reference>
<reference key="5">
    <citation type="journal article" date="2005" name="Nature">
        <title>Generation and annotation of the DNA sequences of human chromosomes 2 and 4.</title>
        <authorList>
            <person name="Hillier L.W."/>
            <person name="Graves T.A."/>
            <person name="Fulton R.S."/>
            <person name="Fulton L.A."/>
            <person name="Pepin K.H."/>
            <person name="Minx P."/>
            <person name="Wagner-McPherson C."/>
            <person name="Layman D."/>
            <person name="Wylie K."/>
            <person name="Sekhon M."/>
            <person name="Becker M.C."/>
            <person name="Fewell G.A."/>
            <person name="Delehaunty K.D."/>
            <person name="Miner T.L."/>
            <person name="Nash W.E."/>
            <person name="Kremitzki C."/>
            <person name="Oddy L."/>
            <person name="Du H."/>
            <person name="Sun H."/>
            <person name="Bradshaw-Cordum H."/>
            <person name="Ali J."/>
            <person name="Carter J."/>
            <person name="Cordes M."/>
            <person name="Harris A."/>
            <person name="Isak A."/>
            <person name="van Brunt A."/>
            <person name="Nguyen C."/>
            <person name="Du F."/>
            <person name="Courtney L."/>
            <person name="Kalicki J."/>
            <person name="Ozersky P."/>
            <person name="Abbott S."/>
            <person name="Armstrong J."/>
            <person name="Belter E.A."/>
            <person name="Caruso L."/>
            <person name="Cedroni M."/>
            <person name="Cotton M."/>
            <person name="Davidson T."/>
            <person name="Desai A."/>
            <person name="Elliott G."/>
            <person name="Erb T."/>
            <person name="Fronick C."/>
            <person name="Gaige T."/>
            <person name="Haakenson W."/>
            <person name="Haglund K."/>
            <person name="Holmes A."/>
            <person name="Harkins R."/>
            <person name="Kim K."/>
            <person name="Kruchowski S.S."/>
            <person name="Strong C.M."/>
            <person name="Grewal N."/>
            <person name="Goyea E."/>
            <person name="Hou S."/>
            <person name="Levy A."/>
            <person name="Martinka S."/>
            <person name="Mead K."/>
            <person name="McLellan M.D."/>
            <person name="Meyer R."/>
            <person name="Randall-Maher J."/>
            <person name="Tomlinson C."/>
            <person name="Dauphin-Kohlberg S."/>
            <person name="Kozlowicz-Reilly A."/>
            <person name="Shah N."/>
            <person name="Swearengen-Shahid S."/>
            <person name="Snider J."/>
            <person name="Strong J.T."/>
            <person name="Thompson J."/>
            <person name="Yoakum M."/>
            <person name="Leonard S."/>
            <person name="Pearman C."/>
            <person name="Trani L."/>
            <person name="Radionenko M."/>
            <person name="Waligorski J.E."/>
            <person name="Wang C."/>
            <person name="Rock S.M."/>
            <person name="Tin-Wollam A.-M."/>
            <person name="Maupin R."/>
            <person name="Latreille P."/>
            <person name="Wendl M.C."/>
            <person name="Yang S.-P."/>
            <person name="Pohl C."/>
            <person name="Wallis J.W."/>
            <person name="Spieth J."/>
            <person name="Bieri T.A."/>
            <person name="Berkowicz N."/>
            <person name="Nelson J.O."/>
            <person name="Osborne J."/>
            <person name="Ding L."/>
            <person name="Meyer R."/>
            <person name="Sabo A."/>
            <person name="Shotland Y."/>
            <person name="Sinha P."/>
            <person name="Wohldmann P.E."/>
            <person name="Cook L.L."/>
            <person name="Hickenbotham M.T."/>
            <person name="Eldred J."/>
            <person name="Williams D."/>
            <person name="Jones T.A."/>
            <person name="She X."/>
            <person name="Ciccarelli F.D."/>
            <person name="Izaurralde E."/>
            <person name="Taylor J."/>
            <person name="Schmutz J."/>
            <person name="Myers R.M."/>
            <person name="Cox D.R."/>
            <person name="Huang X."/>
            <person name="McPherson J.D."/>
            <person name="Mardis E.R."/>
            <person name="Clifton S.W."/>
            <person name="Warren W.C."/>
            <person name="Chinwalla A.T."/>
            <person name="Eddy S.R."/>
            <person name="Marra M.A."/>
            <person name="Ovcharenko I."/>
            <person name="Furey T.S."/>
            <person name="Miller W."/>
            <person name="Eichler E.E."/>
            <person name="Bork P."/>
            <person name="Suyama M."/>
            <person name="Torrents D."/>
            <person name="Waterston R.H."/>
            <person name="Wilson R.K."/>
        </authorList>
    </citation>
    <scope>NUCLEOTIDE SEQUENCE [LARGE SCALE GENOMIC DNA]</scope>
</reference>
<reference key="6">
    <citation type="submission" date="2005-07" db="EMBL/GenBank/DDBJ databases">
        <authorList>
            <person name="Mural R.J."/>
            <person name="Istrail S."/>
            <person name="Sutton G.G."/>
            <person name="Florea L."/>
            <person name="Halpern A.L."/>
            <person name="Mobarry C.M."/>
            <person name="Lippert R."/>
            <person name="Walenz B."/>
            <person name="Shatkay H."/>
            <person name="Dew I."/>
            <person name="Miller J.R."/>
            <person name="Flanigan M.J."/>
            <person name="Edwards N.J."/>
            <person name="Bolanos R."/>
            <person name="Fasulo D."/>
            <person name="Halldorsson B.V."/>
            <person name="Hannenhalli S."/>
            <person name="Turner R."/>
            <person name="Yooseph S."/>
            <person name="Lu F."/>
            <person name="Nusskern D.R."/>
            <person name="Shue B.C."/>
            <person name="Zheng X.H."/>
            <person name="Zhong F."/>
            <person name="Delcher A.L."/>
            <person name="Huson D.H."/>
            <person name="Kravitz S.A."/>
            <person name="Mouchard L."/>
            <person name="Reinert K."/>
            <person name="Remington K.A."/>
            <person name="Clark A.G."/>
            <person name="Waterman M.S."/>
            <person name="Eichler E.E."/>
            <person name="Adams M.D."/>
            <person name="Hunkapiller M.W."/>
            <person name="Myers E.W."/>
            <person name="Venter J.C."/>
        </authorList>
    </citation>
    <scope>NUCLEOTIDE SEQUENCE [LARGE SCALE GENOMIC DNA]</scope>
</reference>
<reference key="7">
    <citation type="journal article" date="2004" name="Genome Res.">
        <title>The status, quality, and expansion of the NIH full-length cDNA project: the Mammalian Gene Collection (MGC).</title>
        <authorList>
            <consortium name="The MGC Project Team"/>
        </authorList>
    </citation>
    <scope>NUCLEOTIDE SEQUENCE [LARGE SCALE MRNA] (ISOFORM 1)</scope>
    <source>
        <tissue>Lung</tissue>
    </source>
</reference>
<reference key="8">
    <citation type="journal article" date="1994" name="FEBS Lett.">
        <title>ADP ribosyl cyclase activity of a novel bone marrow stromal cell surface molecule, BST-1.</title>
        <authorList>
            <person name="Hirata Y."/>
            <person name="Kimura N."/>
            <person name="Sato K."/>
            <person name="Ohsugi Y."/>
            <person name="Takasawa S."/>
            <person name="Okamoto H."/>
            <person name="Ishikawa J."/>
            <person name="Kaisho T."/>
            <person name="Ishihara K."/>
            <person name="Hirano T."/>
        </authorList>
    </citation>
    <scope>PROTEIN SEQUENCE OF 33-43</scope>
    <scope>FUNCTION</scope>
    <scope>CATALYTIC ACTIVITY</scope>
    <scope>ACTIVITY REGULATION</scope>
    <scope>BIOPHYSICOCHEMICAL PROPERTIES</scope>
</reference>
<reference key="9">
    <citation type="journal article" date="2005" name="J. Proteome Res.">
        <title>Human plasma N-glycoproteome analysis by immunoaffinity subtraction, hydrazide chemistry, and mass spectrometry.</title>
        <authorList>
            <person name="Liu T."/>
            <person name="Qian W.-J."/>
            <person name="Gritsenko M.A."/>
            <person name="Camp D.G. II"/>
            <person name="Monroe M.E."/>
            <person name="Moore R.J."/>
            <person name="Smith R.D."/>
        </authorList>
    </citation>
    <scope>GLYCOSYLATION [LARGE SCALE ANALYSIS] AT ASN-192</scope>
    <source>
        <tissue>Plasma</tissue>
    </source>
</reference>
<reference key="10">
    <citation type="journal article" date="2009" name="J. Proteome Res.">
        <title>Glycoproteomics analysis of human liver tissue by combination of multiple enzyme digestion and hydrazide chemistry.</title>
        <authorList>
            <person name="Chen R."/>
            <person name="Jiang X."/>
            <person name="Sun D."/>
            <person name="Han G."/>
            <person name="Wang F."/>
            <person name="Ye M."/>
            <person name="Wang L."/>
            <person name="Zou H."/>
        </authorList>
    </citation>
    <scope>GLYCOSYLATION [LARGE SCALE ANALYSIS] AT ASN-95</scope>
    <source>
        <tissue>Liver</tissue>
    </source>
</reference>
<reference key="11">
    <citation type="journal article" date="2015" name="Proteomics">
        <title>N-terminome analysis of the human mitochondrial proteome.</title>
        <authorList>
            <person name="Vaca Jacome A.S."/>
            <person name="Rabilloud T."/>
            <person name="Schaeffer-Reiss C."/>
            <person name="Rompais M."/>
            <person name="Ayoub D."/>
            <person name="Lane L."/>
            <person name="Bairoch A."/>
            <person name="Van Dorsselaer A."/>
            <person name="Carapito C."/>
        </authorList>
    </citation>
    <scope>IDENTIFICATION BY MASS SPECTROMETRY [LARGE SCALE ANALYSIS]</scope>
</reference>
<reference evidence="13 14 15 16 17 18" key="12">
    <citation type="journal article" date="2002" name="J. Mol. Biol.">
        <title>Crystallographic studies on human BST-1/CD157 with ADP-ribosyl cyclase and NAD glycohydrolase activities.</title>
        <authorList>
            <person name="Yamamoto-Katayama S."/>
            <person name="Ariyoshi M."/>
            <person name="Ishihara K."/>
            <person name="Hirano T."/>
            <person name="Jingami H."/>
            <person name="Morikawa K."/>
        </authorList>
    </citation>
    <scope>X-RAY CRYSTALLOGRAPHY (2.5 ANGSTROMS) OF 33-297 OF APOENZYME AND COMPLEXES WITH NICOTINAMIDE AND SUBSTRATE ANALOGS NMN; ATP-GAMMA-S; ETHENO-NADP AND ETHENO-NAD</scope>
    <scope>FUNCTION</scope>
    <scope>SUBUNIT</scope>
    <scope>DISULFIDE BONDS</scope>
</reference>
<comment type="function">
    <text evidence="5 10 11 12">Catalyzes both the synthesis of cyclic ADP-beta-D-ribose (cADPR) from NAD(+), and its hydrolysis to ADP-D-ribose (ADPR) (PubMed:7805847). Cyclic ADPR is known to serve as an endogenous second messenger that elicits calcium release from intracellular stores, and thus regulates the mobilization of intracellular calcium (Probable). May be involved in pre-B-cell growth (Probable).</text>
</comment>
<comment type="catalytic activity">
    <reaction evidence="5">
        <text>NAD(+) + H2O = ADP-D-ribose + nicotinamide + H(+)</text>
        <dbReference type="Rhea" id="RHEA:16301"/>
        <dbReference type="ChEBI" id="CHEBI:15377"/>
        <dbReference type="ChEBI" id="CHEBI:15378"/>
        <dbReference type="ChEBI" id="CHEBI:17154"/>
        <dbReference type="ChEBI" id="CHEBI:57540"/>
        <dbReference type="ChEBI" id="CHEBI:57967"/>
        <dbReference type="EC" id="3.2.2.6"/>
    </reaction>
    <physiologicalReaction direction="left-to-right" evidence="11">
        <dbReference type="Rhea" id="RHEA:16302"/>
    </physiologicalReaction>
</comment>
<comment type="catalytic activity">
    <reaction evidence="5">
        <text>NAD(+) = cyclic ADP-beta-D-ribose + nicotinamide + H(+)</text>
        <dbReference type="Rhea" id="RHEA:38611"/>
        <dbReference type="ChEBI" id="CHEBI:15378"/>
        <dbReference type="ChEBI" id="CHEBI:17154"/>
        <dbReference type="ChEBI" id="CHEBI:57540"/>
        <dbReference type="ChEBI" id="CHEBI:73672"/>
    </reaction>
    <physiologicalReaction direction="left-to-right" evidence="11">
        <dbReference type="Rhea" id="RHEA:38612"/>
    </physiologicalReaction>
</comment>
<comment type="catalytic activity">
    <reaction evidence="5">
        <text>cyclic ADP-beta-D-ribose + H2O = ADP-D-ribose</text>
        <dbReference type="Rhea" id="RHEA:38615"/>
        <dbReference type="ChEBI" id="CHEBI:15377"/>
        <dbReference type="ChEBI" id="CHEBI:57967"/>
        <dbReference type="ChEBI" id="CHEBI:73672"/>
    </reaction>
    <physiologicalReaction direction="left-to-right" evidence="11">
        <dbReference type="Rhea" id="RHEA:38616"/>
    </physiologicalReaction>
</comment>
<comment type="activity regulation">
    <text evidence="5">ADP-ribosyl cyclase and cADPR hydrolase activities are both activated by Zn(2+) or Mn(2+), and inhibited by Cu(2+), while Mg(2+) and Ca(2+) do not have any significant influence.</text>
</comment>
<comment type="biophysicochemical properties">
    <phDependence>
        <text evidence="5">Optimum pH is 6.5.</text>
    </phDependence>
</comment>
<comment type="subunit">
    <text evidence="2">Homodimer.</text>
</comment>
<comment type="subcellular location">
    <subcellularLocation>
        <location>Cell membrane</location>
        <topology evidence="6">Lipid-anchor</topology>
        <topology evidence="6">GPI-anchor</topology>
    </subcellularLocation>
</comment>
<comment type="alternative products">
    <event type="alternative splicing"/>
    <isoform>
        <id>Q10588-1</id>
        <name>1</name>
        <sequence type="displayed"/>
    </isoform>
    <isoform>
        <id>Q10588-2</id>
        <name>2</name>
        <sequence type="described" ref="VSP_055507"/>
    </isoform>
</comment>
<comment type="tissue specificity">
    <text evidence="6">Expressed in various tissues including placenta, lung, liver and kidney.</text>
</comment>
<comment type="similarity">
    <text evidence="9">Belongs to the ADP-ribosyl cyclase family.</text>
</comment>
<keyword id="KW-0002">3D-structure</keyword>
<keyword id="KW-0025">Alternative splicing</keyword>
<keyword id="KW-1003">Cell membrane</keyword>
<keyword id="KW-0903">Direct protein sequencing</keyword>
<keyword id="KW-1015">Disulfide bond</keyword>
<keyword id="KW-0325">Glycoprotein</keyword>
<keyword id="KW-0336">GPI-anchor</keyword>
<keyword id="KW-0378">Hydrolase</keyword>
<keyword id="KW-0449">Lipoprotein</keyword>
<keyword id="KW-0472">Membrane</keyword>
<keyword id="KW-0520">NAD</keyword>
<keyword id="KW-1267">Proteomics identification</keyword>
<keyword id="KW-1185">Reference proteome</keyword>
<keyword id="KW-0732">Signal</keyword>
<keyword id="KW-0808">Transferase</keyword>
<dbReference type="EC" id="3.2.2.6" evidence="5"/>
<dbReference type="EMBL" id="D21878">
    <property type="protein sequence ID" value="BAA04885.1"/>
    <property type="molecule type" value="mRNA"/>
</dbReference>
<dbReference type="EMBL" id="AB175627">
    <property type="protein sequence ID" value="BAE92566.1"/>
    <property type="molecule type" value="mRNA"/>
</dbReference>
<dbReference type="EMBL" id="BT019502">
    <property type="protein sequence ID" value="AAV38309.1"/>
    <property type="molecule type" value="mRNA"/>
</dbReference>
<dbReference type="EMBL" id="AK312497">
    <property type="protein sequence ID" value="BAG35399.1"/>
    <property type="molecule type" value="mRNA"/>
</dbReference>
<dbReference type="EMBL" id="AC114744">
    <property type="protein sequence ID" value="AAY40930.1"/>
    <property type="molecule type" value="Genomic_DNA"/>
</dbReference>
<dbReference type="EMBL" id="CH471069">
    <property type="protein sequence ID" value="EAW92744.1"/>
    <property type="molecule type" value="Genomic_DNA"/>
</dbReference>
<dbReference type="EMBL" id="BC012095">
    <property type="protein sequence ID" value="AAH12095.1"/>
    <property type="molecule type" value="mRNA"/>
</dbReference>
<dbReference type="CCDS" id="CCDS3416.1">
    <molecule id="Q10588-1"/>
</dbReference>
<dbReference type="PIR" id="I59301">
    <property type="entry name" value="I59301"/>
</dbReference>
<dbReference type="RefSeq" id="NP_004325.2">
    <molecule id="Q10588-1"/>
    <property type="nucleotide sequence ID" value="NM_004334.3"/>
</dbReference>
<dbReference type="RefSeq" id="XP_011512183.1">
    <molecule id="Q10588-2"/>
    <property type="nucleotide sequence ID" value="XM_011513881.3"/>
</dbReference>
<dbReference type="PDB" id="1ISF">
    <property type="method" value="X-ray"/>
    <property type="resolution" value="2.50 A"/>
    <property type="chains" value="A/B=33-297"/>
</dbReference>
<dbReference type="PDB" id="1ISG">
    <property type="method" value="X-ray"/>
    <property type="resolution" value="2.60 A"/>
    <property type="chains" value="A/B=33-297"/>
</dbReference>
<dbReference type="PDB" id="1ISH">
    <property type="method" value="X-ray"/>
    <property type="resolution" value="2.40 A"/>
    <property type="chains" value="A/B=33-297"/>
</dbReference>
<dbReference type="PDB" id="1ISI">
    <property type="method" value="X-ray"/>
    <property type="resolution" value="2.10 A"/>
    <property type="chains" value="A/B=33-297"/>
</dbReference>
<dbReference type="PDB" id="1ISJ">
    <property type="method" value="X-ray"/>
    <property type="resolution" value="2.30 A"/>
    <property type="chains" value="A/B=33-297"/>
</dbReference>
<dbReference type="PDB" id="1ISM">
    <property type="method" value="X-ray"/>
    <property type="resolution" value="3.00 A"/>
    <property type="chains" value="A/B=33-297"/>
</dbReference>
<dbReference type="PDBsum" id="1ISF"/>
<dbReference type="PDBsum" id="1ISG"/>
<dbReference type="PDBsum" id="1ISH"/>
<dbReference type="PDBsum" id="1ISI"/>
<dbReference type="PDBsum" id="1ISJ"/>
<dbReference type="PDBsum" id="1ISM"/>
<dbReference type="SMR" id="Q10588"/>
<dbReference type="BioGRID" id="107148">
    <property type="interactions" value="36"/>
</dbReference>
<dbReference type="FunCoup" id="Q10588">
    <property type="interactions" value="72"/>
</dbReference>
<dbReference type="IntAct" id="Q10588">
    <property type="interactions" value="13"/>
</dbReference>
<dbReference type="STRING" id="9606.ENSP00000265016"/>
<dbReference type="ChEMBL" id="CHEMBL5169147"/>
<dbReference type="DrugBank" id="DB02930">
    <property type="generic name" value="Adenosine 5'-[gamma-thio]triphosphate"/>
</dbReference>
<dbReference type="DrugBank" id="DB02483">
    <property type="generic name" value="Etheno-NAD"/>
</dbReference>
<dbReference type="DrugBank" id="DB03732">
    <property type="generic name" value="Etheno-Nadp"/>
</dbReference>
<dbReference type="DrugBank" id="DB02701">
    <property type="generic name" value="Nicotinamide"/>
</dbReference>
<dbReference type="DrugBank" id="DB03227">
    <property type="generic name" value="Nicotinamide Mononucleotide"/>
</dbReference>
<dbReference type="GlyConnect" id="2017">
    <property type="glycosylation" value="3 N-Linked glycans (2 sites)"/>
</dbReference>
<dbReference type="GlyCosmos" id="Q10588">
    <property type="glycosylation" value="4 sites, 6 glycans"/>
</dbReference>
<dbReference type="GlyGen" id="Q10588">
    <property type="glycosylation" value="4 sites, 25 N-linked glycans (3 sites)"/>
</dbReference>
<dbReference type="iPTMnet" id="Q10588"/>
<dbReference type="PhosphoSitePlus" id="Q10588"/>
<dbReference type="BioMuta" id="BST1"/>
<dbReference type="DMDM" id="116241273"/>
<dbReference type="CPTAC" id="CPTAC-2598"/>
<dbReference type="jPOST" id="Q10588"/>
<dbReference type="MassIVE" id="Q10588"/>
<dbReference type="PaxDb" id="9606-ENSP00000265016"/>
<dbReference type="PeptideAtlas" id="Q10588"/>
<dbReference type="ProteomicsDB" id="58865">
    <molecule id="Q10588-1"/>
</dbReference>
<dbReference type="ABCD" id="Q10588">
    <property type="antibodies" value="4 sequenced antibodies"/>
</dbReference>
<dbReference type="Antibodypedia" id="22988">
    <property type="antibodies" value="541 antibodies from 35 providers"/>
</dbReference>
<dbReference type="DNASU" id="683"/>
<dbReference type="Ensembl" id="ENST00000265016.9">
    <molecule id="Q10588-1"/>
    <property type="protein sequence ID" value="ENSP00000265016.4"/>
    <property type="gene ID" value="ENSG00000109743.11"/>
</dbReference>
<dbReference type="GeneID" id="683"/>
<dbReference type="KEGG" id="hsa:683"/>
<dbReference type="MANE-Select" id="ENST00000265016.9">
    <property type="protein sequence ID" value="ENSP00000265016.4"/>
    <property type="RefSeq nucleotide sequence ID" value="NM_004334.3"/>
    <property type="RefSeq protein sequence ID" value="NP_004325.2"/>
</dbReference>
<dbReference type="UCSC" id="uc003goh.4">
    <molecule id="Q10588-1"/>
    <property type="organism name" value="human"/>
</dbReference>
<dbReference type="AGR" id="HGNC:1118"/>
<dbReference type="CTD" id="683"/>
<dbReference type="DisGeNET" id="683"/>
<dbReference type="GeneCards" id="BST1"/>
<dbReference type="HGNC" id="HGNC:1118">
    <property type="gene designation" value="BST1"/>
</dbReference>
<dbReference type="HPA" id="ENSG00000109743">
    <property type="expression patterns" value="Group enriched (bone marrow, intestine)"/>
</dbReference>
<dbReference type="MIM" id="600387">
    <property type="type" value="gene"/>
</dbReference>
<dbReference type="neXtProt" id="NX_Q10588"/>
<dbReference type="OpenTargets" id="ENSG00000109743"/>
<dbReference type="PharmGKB" id="PA25435"/>
<dbReference type="VEuPathDB" id="HostDB:ENSG00000109743"/>
<dbReference type="eggNOG" id="ENOG502S1HV">
    <property type="taxonomic scope" value="Eukaryota"/>
</dbReference>
<dbReference type="GeneTree" id="ENSGT00390000017291"/>
<dbReference type="HOGENOM" id="CLU_067834_1_0_1"/>
<dbReference type="InParanoid" id="Q10588"/>
<dbReference type="OMA" id="RCYEYIR"/>
<dbReference type="OrthoDB" id="9944984at2759"/>
<dbReference type="PAN-GO" id="Q10588">
    <property type="GO annotations" value="4 GO annotations based on evolutionary models"/>
</dbReference>
<dbReference type="PhylomeDB" id="Q10588"/>
<dbReference type="TreeFam" id="TF332530"/>
<dbReference type="PathwayCommons" id="Q10588"/>
<dbReference type="Reactome" id="R-HSA-163125">
    <property type="pathway name" value="Post-translational modification: synthesis of GPI-anchored proteins"/>
</dbReference>
<dbReference type="Reactome" id="R-HSA-196807">
    <property type="pathway name" value="Nicotinate metabolism"/>
</dbReference>
<dbReference type="Reactome" id="R-HSA-6798695">
    <property type="pathway name" value="Neutrophil degranulation"/>
</dbReference>
<dbReference type="SignaLink" id="Q10588"/>
<dbReference type="SIGNOR" id="Q10588"/>
<dbReference type="BioGRID-ORCS" id="683">
    <property type="hits" value="10 hits in 1148 CRISPR screens"/>
</dbReference>
<dbReference type="ChiTaRS" id="BST1">
    <property type="organism name" value="human"/>
</dbReference>
<dbReference type="EvolutionaryTrace" id="Q10588"/>
<dbReference type="GeneWiki" id="BST1"/>
<dbReference type="GenomeRNAi" id="683"/>
<dbReference type="Pharos" id="Q10588">
    <property type="development level" value="Tbio"/>
</dbReference>
<dbReference type="PRO" id="PR:Q10588"/>
<dbReference type="Proteomes" id="UP000005640">
    <property type="component" value="Chromosome 4"/>
</dbReference>
<dbReference type="RNAct" id="Q10588">
    <property type="molecule type" value="protein"/>
</dbReference>
<dbReference type="Bgee" id="ENSG00000109743">
    <property type="expression patterns" value="Expressed in monocyte and 113 other cell types or tissues"/>
</dbReference>
<dbReference type="ExpressionAtlas" id="Q10588">
    <property type="expression patterns" value="baseline and differential"/>
</dbReference>
<dbReference type="GO" id="GO:0070062">
    <property type="term" value="C:extracellular exosome"/>
    <property type="evidence" value="ECO:0007005"/>
    <property type="project" value="UniProtKB"/>
</dbReference>
<dbReference type="GO" id="GO:0005576">
    <property type="term" value="C:extracellular region"/>
    <property type="evidence" value="ECO:0000304"/>
    <property type="project" value="Reactome"/>
</dbReference>
<dbReference type="GO" id="GO:0005886">
    <property type="term" value="C:plasma membrane"/>
    <property type="evidence" value="ECO:0000314"/>
    <property type="project" value="ParkinsonsUK-UCL"/>
</dbReference>
<dbReference type="GO" id="GO:0098552">
    <property type="term" value="C:side of membrane"/>
    <property type="evidence" value="ECO:0007669"/>
    <property type="project" value="UniProtKB-KW"/>
</dbReference>
<dbReference type="GO" id="GO:0035579">
    <property type="term" value="C:specific granule membrane"/>
    <property type="evidence" value="ECO:0000304"/>
    <property type="project" value="Reactome"/>
</dbReference>
<dbReference type="GO" id="GO:0001931">
    <property type="term" value="C:uropod"/>
    <property type="evidence" value="ECO:0000314"/>
    <property type="project" value="ParkinsonsUK-UCL"/>
</dbReference>
<dbReference type="GO" id="GO:0061809">
    <property type="term" value="F:NAD+ nucleosidase activity, cyclic ADP-ribose generating"/>
    <property type="evidence" value="ECO:0000314"/>
    <property type="project" value="ParkinsonsUK-UCL"/>
</dbReference>
<dbReference type="GO" id="GO:0016849">
    <property type="term" value="F:phosphorus-oxygen lyase activity"/>
    <property type="evidence" value="ECO:0000318"/>
    <property type="project" value="GO_Central"/>
</dbReference>
<dbReference type="GO" id="GO:0016740">
    <property type="term" value="F:transferase activity"/>
    <property type="evidence" value="ECO:0007669"/>
    <property type="project" value="UniProtKB-KW"/>
</dbReference>
<dbReference type="GO" id="GO:0006959">
    <property type="term" value="P:humoral immune response"/>
    <property type="evidence" value="ECO:0000305"/>
    <property type="project" value="ParkinsonsUK-UCL"/>
</dbReference>
<dbReference type="GO" id="GO:0030890">
    <property type="term" value="P:positive regulation of B cell proliferation"/>
    <property type="evidence" value="ECO:0000318"/>
    <property type="project" value="GO_Central"/>
</dbReference>
<dbReference type="GO" id="GO:0008284">
    <property type="term" value="P:positive regulation of cell population proliferation"/>
    <property type="evidence" value="ECO:0000314"/>
    <property type="project" value="ParkinsonsUK-UCL"/>
</dbReference>
<dbReference type="GO" id="GO:0032956">
    <property type="term" value="P:regulation of actin cytoskeleton organization"/>
    <property type="evidence" value="ECO:0000314"/>
    <property type="project" value="ParkinsonsUK-UCL"/>
</dbReference>
<dbReference type="GO" id="GO:0050848">
    <property type="term" value="P:regulation of calcium-mediated signaling"/>
    <property type="evidence" value="ECO:0000315"/>
    <property type="project" value="ParkinsonsUK-UCL"/>
</dbReference>
<dbReference type="GO" id="GO:0001952">
    <property type="term" value="P:regulation of cell-matrix adhesion"/>
    <property type="evidence" value="ECO:0000314"/>
    <property type="project" value="ParkinsonsUK-UCL"/>
</dbReference>
<dbReference type="GO" id="GO:0002691">
    <property type="term" value="P:regulation of cellular extravasation"/>
    <property type="evidence" value="ECO:0000304"/>
    <property type="project" value="ParkinsonsUK-UCL"/>
</dbReference>
<dbReference type="GO" id="GO:0050727">
    <property type="term" value="P:regulation of inflammatory response"/>
    <property type="evidence" value="ECO:0000314"/>
    <property type="project" value="ParkinsonsUK-UCL"/>
</dbReference>
<dbReference type="GO" id="GO:2001044">
    <property type="term" value="P:regulation of integrin-mediated signaling pathway"/>
    <property type="evidence" value="ECO:0000304"/>
    <property type="project" value="ParkinsonsUK-UCL"/>
</dbReference>
<dbReference type="GO" id="GO:0090022">
    <property type="term" value="P:regulation of neutrophil chemotaxis"/>
    <property type="evidence" value="ECO:0000314"/>
    <property type="project" value="ParkinsonsUK-UCL"/>
</dbReference>
<dbReference type="GO" id="GO:0090322">
    <property type="term" value="P:regulation of superoxide metabolic process"/>
    <property type="evidence" value="ECO:0000304"/>
    <property type="project" value="ParkinsonsUK-UCL"/>
</dbReference>
<dbReference type="GO" id="GO:0007165">
    <property type="term" value="P:signal transduction"/>
    <property type="evidence" value="ECO:0000304"/>
    <property type="project" value="ParkinsonsUK-UCL"/>
</dbReference>
<dbReference type="CDD" id="cd04759">
    <property type="entry name" value="Rib_hydrolase"/>
    <property type="match status" value="1"/>
</dbReference>
<dbReference type="Gene3D" id="1.20.82.10">
    <property type="entry name" value="ADP Ribosyl Cyclase, Chain A, domain 1"/>
    <property type="match status" value="1"/>
</dbReference>
<dbReference type="Gene3D" id="3.40.50.720">
    <property type="entry name" value="NAD(P)-binding Rossmann-like Domain"/>
    <property type="match status" value="1"/>
</dbReference>
<dbReference type="InterPro" id="IPR003193">
    <property type="entry name" value="ADP-ribosyl_cyclase"/>
</dbReference>
<dbReference type="PANTHER" id="PTHR10912">
    <property type="entry name" value="ADP-RIBOSYL CYCLASE"/>
    <property type="match status" value="1"/>
</dbReference>
<dbReference type="PANTHER" id="PTHR10912:SF4">
    <property type="entry name" value="ADP-RIBOSYL CYCLASE_CYCLIC ADP-RIBOSE HYDROLASE 2"/>
    <property type="match status" value="1"/>
</dbReference>
<dbReference type="Pfam" id="PF02267">
    <property type="entry name" value="Rib_hydrolayse"/>
    <property type="match status" value="1"/>
</dbReference>
<dbReference type="SUPFAM" id="SSF52309">
    <property type="entry name" value="N-(deoxy)ribosyltransferase-like"/>
    <property type="match status" value="1"/>
</dbReference>
<organism>
    <name type="scientific">Homo sapiens</name>
    <name type="common">Human</name>
    <dbReference type="NCBI Taxonomy" id="9606"/>
    <lineage>
        <taxon>Eukaryota</taxon>
        <taxon>Metazoa</taxon>
        <taxon>Chordata</taxon>
        <taxon>Craniata</taxon>
        <taxon>Vertebrata</taxon>
        <taxon>Euteleostomi</taxon>
        <taxon>Mammalia</taxon>
        <taxon>Eutheria</taxon>
        <taxon>Euarchontoglires</taxon>
        <taxon>Primates</taxon>
        <taxon>Haplorrhini</taxon>
        <taxon>Catarrhini</taxon>
        <taxon>Hominidae</taxon>
        <taxon>Homo</taxon>
    </lineage>
</organism>
<feature type="signal peptide" evidence="5">
    <location>
        <begin position="1"/>
        <end position="32"/>
    </location>
</feature>
<feature type="chain" id="PRO_0000004032" description="ADP-ribosyl cyclase/cyclic ADP-ribose hydrolase 2">
    <location>
        <begin position="33"/>
        <end position="293"/>
    </location>
</feature>
<feature type="propeptide" id="PRO_0000004033" description="Removed in mature form" evidence="1">
    <location>
        <begin position="294"/>
        <end position="318"/>
    </location>
</feature>
<feature type="binding site" evidence="10 17">
    <location>
        <position position="109"/>
    </location>
    <ligand>
        <name>NAD(+)</name>
        <dbReference type="ChEBI" id="CHEBI:57540"/>
    </ligand>
</feature>
<feature type="binding site" evidence="2 16">
    <location>
        <position position="109"/>
    </location>
    <ligand>
        <name>nicotinamide</name>
        <dbReference type="ChEBI" id="CHEBI:17154"/>
    </ligand>
</feature>
<feature type="binding site" evidence="10 16 17">
    <location>
        <position position="172"/>
    </location>
    <ligand>
        <name>NAD(+)</name>
        <dbReference type="ChEBI" id="CHEBI:57540"/>
    </ligand>
</feature>
<feature type="binding site" evidence="10 17">
    <location>
        <position position="210"/>
    </location>
    <ligand>
        <name>NAD(+)</name>
        <dbReference type="ChEBI" id="CHEBI:57540"/>
    </ligand>
</feature>
<feature type="lipid moiety-binding region" description="GPI-anchor amidated alanine" evidence="1">
    <location>
        <position position="293"/>
    </location>
</feature>
<feature type="glycosylation site" description="N-linked (GlcNAc...) asparagine" evidence="1">
    <location>
        <position position="66"/>
    </location>
</feature>
<feature type="glycosylation site" description="N-linked (GlcNAc...) asparagine" evidence="4">
    <location>
        <position position="95"/>
    </location>
</feature>
<feature type="glycosylation site" description="N-linked (GlcNAc...) asparagine" evidence="1">
    <location>
        <position position="148"/>
    </location>
</feature>
<feature type="glycosylation site" description="N-linked (GlcNAc...) asparagine" evidence="2 3 13 14 15 16 17 18">
    <location>
        <position position="192"/>
    </location>
</feature>
<feature type="disulfide bond" evidence="2 13 14 15 16 17 18">
    <location>
        <begin position="51"/>
        <end position="67"/>
    </location>
</feature>
<feature type="disulfide bond" evidence="2 13 14 15 16 17 18">
    <location>
        <begin position="83"/>
        <end position="163"/>
    </location>
</feature>
<feature type="disulfide bond" evidence="2 13 14 15 16 17 18">
    <location>
        <begin position="144"/>
        <end position="157"/>
    </location>
</feature>
<feature type="disulfide bond" evidence="2 13 14 15 16 17 18">
    <location>
        <begin position="238"/>
        <end position="259"/>
    </location>
</feature>
<feature type="disulfide bond" evidence="2 13 14 15 16 17 18">
    <location>
        <begin position="271"/>
        <end position="280"/>
    </location>
</feature>
<feature type="splice variant" id="VSP_055507" description="In isoform 2." evidence="8">
    <location>
        <begin position="6"/>
        <end position="63"/>
    </location>
</feature>
<feature type="sequence variant" id="VAR_028438" description="In dbSNP:rs2302466.">
    <original>A</original>
    <variation>V</variation>
    <location>
        <position position="77"/>
    </location>
</feature>
<feature type="sequence variant" id="VAR_028439" description="In dbSNP:rs6840615.">
    <original>I</original>
    <variation>V</variation>
    <location>
        <position position="101"/>
    </location>
</feature>
<feature type="sequence variant" id="VAR_021964" description="In dbSNP:rs2302465.">
    <original>R</original>
    <variation>H</variation>
    <location>
        <position position="125"/>
    </location>
</feature>
<feature type="sequence variant" id="VAR_021965" description="In dbSNP:rs2302464.">
    <original>R</original>
    <variation>Q</variation>
    <location>
        <position position="145"/>
    </location>
</feature>
<feature type="sequence conflict" description="In Ref. 1; BAA04885." evidence="9" ref="1">
    <original>G</original>
    <variation>A</variation>
    <location>
        <position position="36"/>
    </location>
</feature>
<feature type="helix" evidence="19">
    <location>
        <begin position="43"/>
        <end position="57"/>
    </location>
</feature>
<feature type="helix" evidence="19">
    <location>
        <begin position="60"/>
        <end position="62"/>
    </location>
</feature>
<feature type="helix" evidence="19">
    <location>
        <begin position="67"/>
        <end position="74"/>
    </location>
</feature>
<feature type="helix" evidence="19">
    <location>
        <begin position="75"/>
        <end position="78"/>
    </location>
</feature>
<feature type="helix" evidence="19">
    <location>
        <begin position="87"/>
        <end position="90"/>
    </location>
</feature>
<feature type="helix" evidence="19">
    <location>
        <begin position="91"/>
        <end position="97"/>
    </location>
</feature>
<feature type="strand" evidence="19">
    <location>
        <begin position="106"/>
        <end position="111"/>
    </location>
</feature>
<feature type="helix" evidence="19">
    <location>
        <begin position="113"/>
        <end position="120"/>
    </location>
</feature>
<feature type="turn" evidence="19">
    <location>
        <begin position="121"/>
        <end position="124"/>
    </location>
</feature>
<feature type="helix" evidence="19">
    <location>
        <begin position="129"/>
        <end position="131"/>
    </location>
</feature>
<feature type="helix" evidence="19">
    <location>
        <begin position="133"/>
        <end position="136"/>
    </location>
</feature>
<feature type="turn" evidence="19">
    <location>
        <begin position="137"/>
        <end position="140"/>
    </location>
</feature>
<feature type="strand" evidence="19">
    <location>
        <begin position="147"/>
        <end position="152"/>
    </location>
</feature>
<feature type="strand" evidence="19">
    <location>
        <begin position="154"/>
        <end position="157"/>
    </location>
</feature>
<feature type="turn" evidence="19">
    <location>
        <begin position="160"/>
        <end position="162"/>
    </location>
</feature>
<feature type="helix" evidence="19">
    <location>
        <begin position="167"/>
        <end position="181"/>
    </location>
</feature>
<feature type="strand" evidence="19">
    <location>
        <begin position="185"/>
        <end position="192"/>
    </location>
</feature>
<feature type="strand" evidence="19">
    <location>
        <begin position="202"/>
        <end position="204"/>
    </location>
</feature>
<feature type="helix" evidence="19">
    <location>
        <begin position="205"/>
        <end position="209"/>
    </location>
</feature>
<feature type="helix" evidence="19">
    <location>
        <begin position="211"/>
        <end position="213"/>
    </location>
</feature>
<feature type="helix" evidence="19">
    <location>
        <begin position="216"/>
        <end position="218"/>
    </location>
</feature>
<feature type="strand" evidence="19">
    <location>
        <begin position="219"/>
        <end position="227"/>
    </location>
</feature>
<feature type="helix" evidence="19">
    <location>
        <begin position="242"/>
        <end position="252"/>
    </location>
</feature>
<feature type="strand" evidence="19">
    <location>
        <begin position="257"/>
        <end position="261"/>
    </location>
</feature>
<feature type="helix" evidence="19">
    <location>
        <begin position="264"/>
        <end position="271"/>
    </location>
</feature>
<feature type="helix" evidence="19">
    <location>
        <begin position="278"/>
        <end position="280"/>
    </location>
</feature>
<sequence>MAAQGCAASRLLQLLLQLLLLLLLLAAGGARARWRGEGTSAHLRDIFLGRCAEYRALLSPEQRNKNCTAIWEAFKVALDKDPCSVLPSDYDLFINLSRHSIPRDKSLFWENSHLLVNSFADNTRRFMPLSDVLYGRVADFLSWCRQKNDSGLDYQSCPTSEDCENNPVDSFWKRASIQYSKDSSGVIHVMLNGSEPTGAYPIKGFFADYEIPNLQKEKITRIEIWVMHEIGGPNVESCGEGSMKVLEKRLKDMGFQYSCINDYRPVKLLQCVDHSTHPDCALKSAAAATQRKAPSLYTEQRAGLIIPLFLVLASRTQL</sequence>
<accession>Q10588</accession>
<accession>B2R6A2</accession>
<accession>Q1XII0</accession>
<accession>Q5U0K0</accession>
<accession>Q96EN3</accession>
<proteinExistence type="evidence at protein level"/>
<evidence type="ECO:0000255" key="1"/>
<evidence type="ECO:0000269" key="2">
    <source>
    </source>
</evidence>
<evidence type="ECO:0000269" key="3">
    <source>
    </source>
</evidence>
<evidence type="ECO:0000269" key="4">
    <source>
    </source>
</evidence>
<evidence type="ECO:0000269" key="5">
    <source>
    </source>
</evidence>
<evidence type="ECO:0000269" key="6">
    <source>
    </source>
</evidence>
<evidence type="ECO:0000303" key="7">
    <source>
    </source>
</evidence>
<evidence type="ECO:0000303" key="8">
    <source ref="2"/>
</evidence>
<evidence type="ECO:0000305" key="9"/>
<evidence type="ECO:0000305" key="10">
    <source>
    </source>
</evidence>
<evidence type="ECO:0000305" key="11">
    <source>
    </source>
</evidence>
<evidence type="ECO:0000305" key="12">
    <source>
    </source>
</evidence>
<evidence type="ECO:0007744" key="13">
    <source>
        <dbReference type="PDB" id="1ISF"/>
    </source>
</evidence>
<evidence type="ECO:0007744" key="14">
    <source>
        <dbReference type="PDB" id="1ISG"/>
    </source>
</evidence>
<evidence type="ECO:0007744" key="15">
    <source>
        <dbReference type="PDB" id="1ISH"/>
    </source>
</evidence>
<evidence type="ECO:0007744" key="16">
    <source>
        <dbReference type="PDB" id="1ISI"/>
    </source>
</evidence>
<evidence type="ECO:0007744" key="17">
    <source>
        <dbReference type="PDB" id="1ISJ"/>
    </source>
</evidence>
<evidence type="ECO:0007744" key="18">
    <source>
        <dbReference type="PDB" id="1ISM"/>
    </source>
</evidence>
<evidence type="ECO:0007829" key="19">
    <source>
        <dbReference type="PDB" id="1ISI"/>
    </source>
</evidence>
<name>BST1_HUMAN</name>
<protein>
    <recommendedName>
        <fullName evidence="11">ADP-ribosyl cyclase/cyclic ADP-ribose hydrolase 2</fullName>
        <ecNumber evidence="5">3.2.2.6</ecNumber>
    </recommendedName>
    <alternativeName>
        <fullName>ADP-ribosyl cyclase 2</fullName>
    </alternativeName>
    <alternativeName>
        <fullName evidence="7">Bone marrow stromal cell antigen 1</fullName>
        <shortName evidence="7">BST-1</shortName>
    </alternativeName>
    <alternativeName>
        <fullName>Cyclic ADP-ribose hydrolase 2</fullName>
        <shortName>cADPR hydrolase 2</shortName>
    </alternativeName>
    <cdAntigenName>CD157</cdAntigenName>
</protein>
<gene>
    <name type="primary">BST1</name>
</gene>